<feature type="chain" id="PRO_1000006048" description="Elongation factor Ts">
    <location>
        <begin position="1"/>
        <end position="293"/>
    </location>
</feature>
<feature type="region of interest" description="Involved in Mg(2+) ion dislocation from EF-Tu" evidence="1">
    <location>
        <begin position="80"/>
        <end position="83"/>
    </location>
</feature>
<name>EFTS_AERS4</name>
<sequence>MANVTAALVKELRERTAAGMMDCKKALEEAAGDIELAIENMRKSGQAKAAKKAGRIAAEGVIFARTEGNVAVMIELNSETDFVAKDASFMAMGQKIADIAATQKIADVDALKAADFGNGESVELTITNLIAKIGENMNLRRVMLVEGDNLGTYVHGSRIGVITKLTGGTAELAKDLAMHVAANSPQFVKPEDVSAEVVAKEREIQIDIAINSGKPKDIAEKMVEGRMKKFTGEVSLTGQPFVKDPSMTVAELLKKEGADVVSFTRFEVGEGIEKQETDFAAEVAAQIAAAQKA</sequence>
<keyword id="KW-0963">Cytoplasm</keyword>
<keyword id="KW-0251">Elongation factor</keyword>
<keyword id="KW-0648">Protein biosynthesis</keyword>
<accession>A4SQI1</accession>
<organism>
    <name type="scientific">Aeromonas salmonicida (strain A449)</name>
    <dbReference type="NCBI Taxonomy" id="382245"/>
    <lineage>
        <taxon>Bacteria</taxon>
        <taxon>Pseudomonadati</taxon>
        <taxon>Pseudomonadota</taxon>
        <taxon>Gammaproteobacteria</taxon>
        <taxon>Aeromonadales</taxon>
        <taxon>Aeromonadaceae</taxon>
        <taxon>Aeromonas</taxon>
    </lineage>
</organism>
<comment type="function">
    <text evidence="1">Associates with the EF-Tu.GDP complex and induces the exchange of GDP to GTP. It remains bound to the aminoacyl-tRNA.EF-Tu.GTP complex up to the GTP hydrolysis stage on the ribosome.</text>
</comment>
<comment type="subcellular location">
    <subcellularLocation>
        <location evidence="1">Cytoplasm</location>
    </subcellularLocation>
</comment>
<comment type="similarity">
    <text evidence="1">Belongs to the EF-Ts family.</text>
</comment>
<proteinExistence type="inferred from homology"/>
<gene>
    <name evidence="1" type="primary">tsf</name>
    <name type="ordered locus">ASA_3159</name>
</gene>
<protein>
    <recommendedName>
        <fullName evidence="1">Elongation factor Ts</fullName>
        <shortName evidence="1">EF-Ts</shortName>
    </recommendedName>
</protein>
<dbReference type="EMBL" id="CP000644">
    <property type="protein sequence ID" value="ABO91153.1"/>
    <property type="molecule type" value="Genomic_DNA"/>
</dbReference>
<dbReference type="RefSeq" id="WP_005312074.1">
    <property type="nucleotide sequence ID" value="NC_009348.1"/>
</dbReference>
<dbReference type="SMR" id="A4SQI1"/>
<dbReference type="STRING" id="29491.GCA_000820065_03540"/>
<dbReference type="GeneID" id="79880883"/>
<dbReference type="KEGG" id="asa:ASA_3159"/>
<dbReference type="eggNOG" id="COG0264">
    <property type="taxonomic scope" value="Bacteria"/>
</dbReference>
<dbReference type="HOGENOM" id="CLU_047155_0_0_6"/>
<dbReference type="Proteomes" id="UP000000225">
    <property type="component" value="Chromosome"/>
</dbReference>
<dbReference type="GO" id="GO:0005737">
    <property type="term" value="C:cytoplasm"/>
    <property type="evidence" value="ECO:0007669"/>
    <property type="project" value="UniProtKB-SubCell"/>
</dbReference>
<dbReference type="GO" id="GO:0003746">
    <property type="term" value="F:translation elongation factor activity"/>
    <property type="evidence" value="ECO:0007669"/>
    <property type="project" value="UniProtKB-UniRule"/>
</dbReference>
<dbReference type="CDD" id="cd14275">
    <property type="entry name" value="UBA_EF-Ts"/>
    <property type="match status" value="1"/>
</dbReference>
<dbReference type="FunFam" id="1.10.286.20:FF:000001">
    <property type="entry name" value="Elongation factor Ts"/>
    <property type="match status" value="1"/>
</dbReference>
<dbReference type="FunFam" id="1.10.8.10:FF:000001">
    <property type="entry name" value="Elongation factor Ts"/>
    <property type="match status" value="1"/>
</dbReference>
<dbReference type="FunFam" id="3.30.479.20:FF:000001">
    <property type="entry name" value="Elongation factor Ts"/>
    <property type="match status" value="1"/>
</dbReference>
<dbReference type="Gene3D" id="1.10.286.20">
    <property type="match status" value="1"/>
</dbReference>
<dbReference type="Gene3D" id="1.10.8.10">
    <property type="entry name" value="DNA helicase RuvA subunit, C-terminal domain"/>
    <property type="match status" value="1"/>
</dbReference>
<dbReference type="Gene3D" id="3.30.479.20">
    <property type="entry name" value="Elongation factor Ts, dimerisation domain"/>
    <property type="match status" value="2"/>
</dbReference>
<dbReference type="HAMAP" id="MF_00050">
    <property type="entry name" value="EF_Ts"/>
    <property type="match status" value="1"/>
</dbReference>
<dbReference type="InterPro" id="IPR036402">
    <property type="entry name" value="EF-Ts_dimer_sf"/>
</dbReference>
<dbReference type="InterPro" id="IPR001816">
    <property type="entry name" value="Transl_elong_EFTs/EF1B"/>
</dbReference>
<dbReference type="InterPro" id="IPR014039">
    <property type="entry name" value="Transl_elong_EFTs/EF1B_dimer"/>
</dbReference>
<dbReference type="InterPro" id="IPR018101">
    <property type="entry name" value="Transl_elong_Ts_CS"/>
</dbReference>
<dbReference type="InterPro" id="IPR009060">
    <property type="entry name" value="UBA-like_sf"/>
</dbReference>
<dbReference type="NCBIfam" id="TIGR00116">
    <property type="entry name" value="tsf"/>
    <property type="match status" value="1"/>
</dbReference>
<dbReference type="PANTHER" id="PTHR11741">
    <property type="entry name" value="ELONGATION FACTOR TS"/>
    <property type="match status" value="1"/>
</dbReference>
<dbReference type="PANTHER" id="PTHR11741:SF0">
    <property type="entry name" value="ELONGATION FACTOR TS, MITOCHONDRIAL"/>
    <property type="match status" value="1"/>
</dbReference>
<dbReference type="Pfam" id="PF00889">
    <property type="entry name" value="EF_TS"/>
    <property type="match status" value="1"/>
</dbReference>
<dbReference type="SUPFAM" id="SSF54713">
    <property type="entry name" value="Elongation factor Ts (EF-Ts), dimerisation domain"/>
    <property type="match status" value="2"/>
</dbReference>
<dbReference type="SUPFAM" id="SSF46934">
    <property type="entry name" value="UBA-like"/>
    <property type="match status" value="1"/>
</dbReference>
<dbReference type="PROSITE" id="PS01127">
    <property type="entry name" value="EF_TS_2"/>
    <property type="match status" value="1"/>
</dbReference>
<reference key="1">
    <citation type="journal article" date="2008" name="BMC Genomics">
        <title>The genome of Aeromonas salmonicida subsp. salmonicida A449: insights into the evolution of a fish pathogen.</title>
        <authorList>
            <person name="Reith M.E."/>
            <person name="Singh R.K."/>
            <person name="Curtis B."/>
            <person name="Boyd J.M."/>
            <person name="Bouevitch A."/>
            <person name="Kimball J."/>
            <person name="Munholland J."/>
            <person name="Murphy C."/>
            <person name="Sarty D."/>
            <person name="Williams J."/>
            <person name="Nash J.H."/>
            <person name="Johnson S.C."/>
            <person name="Brown L.L."/>
        </authorList>
    </citation>
    <scope>NUCLEOTIDE SEQUENCE [LARGE SCALE GENOMIC DNA]</scope>
    <source>
        <strain>A449</strain>
    </source>
</reference>
<evidence type="ECO:0000255" key="1">
    <source>
        <dbReference type="HAMAP-Rule" id="MF_00050"/>
    </source>
</evidence>